<sequence>MELVLKDAQSALEVSETTFGRDFNEALVHQVVVAYAANARQGTRAQKTRAEVTGSGKKPWRQKGTGRARAGSVKGPIWRGGGVTFAAKTQDHSQKVNKKMYRGALKSILSELVRQERLVVVESFGVEAPKTKELKAKLKAMNLEDVLIVTAEVDENLFLAARNLYKVDVRDVAGLDPVSLIAFNTVLVTADAVKQIEEMLA</sequence>
<proteinExistence type="inferred from homology"/>
<evidence type="ECO:0000255" key="1">
    <source>
        <dbReference type="HAMAP-Rule" id="MF_01328"/>
    </source>
</evidence>
<evidence type="ECO:0000256" key="2">
    <source>
        <dbReference type="SAM" id="MobiDB-lite"/>
    </source>
</evidence>
<evidence type="ECO:0000305" key="3"/>
<dbReference type="EMBL" id="CP000503">
    <property type="protein sequence ID" value="ABM23010.1"/>
    <property type="molecule type" value="Genomic_DNA"/>
</dbReference>
<dbReference type="RefSeq" id="WP_006083599.1">
    <property type="nucleotide sequence ID" value="NC_008750.1"/>
</dbReference>
<dbReference type="SMR" id="A1REB5"/>
<dbReference type="GeneID" id="67441761"/>
<dbReference type="KEGG" id="shw:Sputw3181_0157"/>
<dbReference type="HOGENOM" id="CLU_041575_5_2_6"/>
<dbReference type="Proteomes" id="UP000002597">
    <property type="component" value="Chromosome"/>
</dbReference>
<dbReference type="GO" id="GO:1990904">
    <property type="term" value="C:ribonucleoprotein complex"/>
    <property type="evidence" value="ECO:0007669"/>
    <property type="project" value="UniProtKB-KW"/>
</dbReference>
<dbReference type="GO" id="GO:0005840">
    <property type="term" value="C:ribosome"/>
    <property type="evidence" value="ECO:0007669"/>
    <property type="project" value="UniProtKB-KW"/>
</dbReference>
<dbReference type="GO" id="GO:0019843">
    <property type="term" value="F:rRNA binding"/>
    <property type="evidence" value="ECO:0007669"/>
    <property type="project" value="UniProtKB-UniRule"/>
</dbReference>
<dbReference type="GO" id="GO:0003735">
    <property type="term" value="F:structural constituent of ribosome"/>
    <property type="evidence" value="ECO:0007669"/>
    <property type="project" value="InterPro"/>
</dbReference>
<dbReference type="GO" id="GO:0006412">
    <property type="term" value="P:translation"/>
    <property type="evidence" value="ECO:0007669"/>
    <property type="project" value="UniProtKB-UniRule"/>
</dbReference>
<dbReference type="FunFam" id="3.40.1370.10:FF:000001">
    <property type="entry name" value="50S ribosomal protein L4"/>
    <property type="match status" value="1"/>
</dbReference>
<dbReference type="Gene3D" id="3.40.1370.10">
    <property type="match status" value="1"/>
</dbReference>
<dbReference type="HAMAP" id="MF_01328_B">
    <property type="entry name" value="Ribosomal_uL4_B"/>
    <property type="match status" value="1"/>
</dbReference>
<dbReference type="InterPro" id="IPR002136">
    <property type="entry name" value="Ribosomal_uL4"/>
</dbReference>
<dbReference type="InterPro" id="IPR013005">
    <property type="entry name" value="Ribosomal_uL4-like"/>
</dbReference>
<dbReference type="InterPro" id="IPR023574">
    <property type="entry name" value="Ribosomal_uL4_dom_sf"/>
</dbReference>
<dbReference type="NCBIfam" id="TIGR03953">
    <property type="entry name" value="rplD_bact"/>
    <property type="match status" value="1"/>
</dbReference>
<dbReference type="PANTHER" id="PTHR10746">
    <property type="entry name" value="50S RIBOSOMAL PROTEIN L4"/>
    <property type="match status" value="1"/>
</dbReference>
<dbReference type="PANTHER" id="PTHR10746:SF6">
    <property type="entry name" value="LARGE RIBOSOMAL SUBUNIT PROTEIN UL4M"/>
    <property type="match status" value="1"/>
</dbReference>
<dbReference type="Pfam" id="PF00573">
    <property type="entry name" value="Ribosomal_L4"/>
    <property type="match status" value="1"/>
</dbReference>
<dbReference type="SUPFAM" id="SSF52166">
    <property type="entry name" value="Ribosomal protein L4"/>
    <property type="match status" value="1"/>
</dbReference>
<feature type="chain" id="PRO_1000052500" description="Large ribosomal subunit protein uL4">
    <location>
        <begin position="1"/>
        <end position="201"/>
    </location>
</feature>
<feature type="region of interest" description="Disordered" evidence="2">
    <location>
        <begin position="45"/>
        <end position="72"/>
    </location>
</feature>
<reference key="1">
    <citation type="submission" date="2006-12" db="EMBL/GenBank/DDBJ databases">
        <title>Complete sequence of Shewanella sp. W3-18-1.</title>
        <authorList>
            <consortium name="US DOE Joint Genome Institute"/>
            <person name="Copeland A."/>
            <person name="Lucas S."/>
            <person name="Lapidus A."/>
            <person name="Barry K."/>
            <person name="Detter J.C."/>
            <person name="Glavina del Rio T."/>
            <person name="Hammon N."/>
            <person name="Israni S."/>
            <person name="Dalin E."/>
            <person name="Tice H."/>
            <person name="Pitluck S."/>
            <person name="Chain P."/>
            <person name="Malfatti S."/>
            <person name="Shin M."/>
            <person name="Vergez L."/>
            <person name="Schmutz J."/>
            <person name="Larimer F."/>
            <person name="Land M."/>
            <person name="Hauser L."/>
            <person name="Kyrpides N."/>
            <person name="Lykidis A."/>
            <person name="Tiedje J."/>
            <person name="Richardson P."/>
        </authorList>
    </citation>
    <scope>NUCLEOTIDE SEQUENCE [LARGE SCALE GENOMIC DNA]</scope>
    <source>
        <strain>W3-18-1</strain>
    </source>
</reference>
<keyword id="KW-0687">Ribonucleoprotein</keyword>
<keyword id="KW-0689">Ribosomal protein</keyword>
<keyword id="KW-0694">RNA-binding</keyword>
<keyword id="KW-0699">rRNA-binding</keyword>
<organism>
    <name type="scientific">Shewanella sp. (strain W3-18-1)</name>
    <dbReference type="NCBI Taxonomy" id="351745"/>
    <lineage>
        <taxon>Bacteria</taxon>
        <taxon>Pseudomonadati</taxon>
        <taxon>Pseudomonadota</taxon>
        <taxon>Gammaproteobacteria</taxon>
        <taxon>Alteromonadales</taxon>
        <taxon>Shewanellaceae</taxon>
        <taxon>Shewanella</taxon>
    </lineage>
</organism>
<comment type="function">
    <text evidence="1">One of the primary rRNA binding proteins, this protein initially binds near the 5'-end of the 23S rRNA. It is important during the early stages of 50S assembly. It makes multiple contacts with different domains of the 23S rRNA in the assembled 50S subunit and ribosome.</text>
</comment>
<comment type="function">
    <text evidence="1">Forms part of the polypeptide exit tunnel.</text>
</comment>
<comment type="subunit">
    <text evidence="1">Part of the 50S ribosomal subunit.</text>
</comment>
<comment type="similarity">
    <text evidence="1">Belongs to the universal ribosomal protein uL4 family.</text>
</comment>
<protein>
    <recommendedName>
        <fullName evidence="1">Large ribosomal subunit protein uL4</fullName>
    </recommendedName>
    <alternativeName>
        <fullName evidence="3">50S ribosomal protein L4</fullName>
    </alternativeName>
</protein>
<gene>
    <name evidence="1" type="primary">rplD</name>
    <name type="ordered locus">Sputw3181_0157</name>
</gene>
<accession>A1REB5</accession>
<name>RL4_SHESW</name>